<dbReference type="EMBL" id="AAFI02000027">
    <property type="protein sequence ID" value="EAL67870.1"/>
    <property type="molecule type" value="Genomic_DNA"/>
</dbReference>
<dbReference type="RefSeq" id="XP_641846.1">
    <property type="nucleotide sequence ID" value="XM_636754.1"/>
</dbReference>
<dbReference type="SMR" id="Q54X82"/>
<dbReference type="FunCoup" id="Q54X82">
    <property type="interactions" value="758"/>
</dbReference>
<dbReference type="STRING" id="44689.Q54X82"/>
<dbReference type="PaxDb" id="44689-DDB0234067"/>
<dbReference type="EnsemblProtists" id="EAL67870">
    <property type="protein sequence ID" value="EAL67870"/>
    <property type="gene ID" value="DDB_G0279141"/>
</dbReference>
<dbReference type="GeneID" id="8621892"/>
<dbReference type="KEGG" id="ddi:DDB_G0279141"/>
<dbReference type="dictyBase" id="DDB_G0279141">
    <property type="gene designation" value="ap1b1"/>
</dbReference>
<dbReference type="VEuPathDB" id="AmoebaDB:DDB_G0279141"/>
<dbReference type="eggNOG" id="KOG1061">
    <property type="taxonomic scope" value="Eukaryota"/>
</dbReference>
<dbReference type="HOGENOM" id="CLU_006320_2_0_1"/>
<dbReference type="InParanoid" id="Q54X82"/>
<dbReference type="OMA" id="QPDKALM"/>
<dbReference type="PhylomeDB" id="Q54X82"/>
<dbReference type="Reactome" id="R-DDI-432720">
    <property type="pathway name" value="Lysosome Vesicle Biogenesis"/>
</dbReference>
<dbReference type="Reactome" id="R-DDI-437239">
    <property type="pathway name" value="Recycling pathway of L1"/>
</dbReference>
<dbReference type="Reactome" id="R-DDI-8856825">
    <property type="pathway name" value="Cargo recognition for clathrin-mediated endocytosis"/>
</dbReference>
<dbReference type="Reactome" id="R-DDI-8856828">
    <property type="pathway name" value="Clathrin-mediated endocytosis"/>
</dbReference>
<dbReference type="Reactome" id="R-DDI-8866427">
    <property type="pathway name" value="VLDLR internalisation and degradation"/>
</dbReference>
<dbReference type="Reactome" id="R-DDI-8964038">
    <property type="pathway name" value="LDL clearance"/>
</dbReference>
<dbReference type="PRO" id="PR:Q54X82"/>
<dbReference type="Proteomes" id="UP000002195">
    <property type="component" value="Chromosome 3"/>
</dbReference>
<dbReference type="GO" id="GO:0030121">
    <property type="term" value="C:AP-1 adaptor complex"/>
    <property type="evidence" value="ECO:0000314"/>
    <property type="project" value="dictyBase"/>
</dbReference>
<dbReference type="GO" id="GO:0030122">
    <property type="term" value="C:AP-2 adaptor complex"/>
    <property type="evidence" value="ECO:0000314"/>
    <property type="project" value="dictyBase"/>
</dbReference>
<dbReference type="GO" id="GO:0030132">
    <property type="term" value="C:clathrin coat of coated pit"/>
    <property type="evidence" value="ECO:0000305"/>
    <property type="project" value="dictyBase"/>
</dbReference>
<dbReference type="GO" id="GO:0030276">
    <property type="term" value="F:clathrin binding"/>
    <property type="evidence" value="ECO:0007669"/>
    <property type="project" value="InterPro"/>
</dbReference>
<dbReference type="GO" id="GO:0031152">
    <property type="term" value="P:aggregation involved in sorocarp development"/>
    <property type="evidence" value="ECO:0000315"/>
    <property type="project" value="dictyBase"/>
</dbReference>
<dbReference type="GO" id="GO:0033298">
    <property type="term" value="P:contractile vacuole organization"/>
    <property type="evidence" value="ECO:0000315"/>
    <property type="project" value="dictyBase"/>
</dbReference>
<dbReference type="GO" id="GO:0006971">
    <property type="term" value="P:hypotonic response"/>
    <property type="evidence" value="ECO:0000315"/>
    <property type="project" value="dictyBase"/>
</dbReference>
<dbReference type="GO" id="GO:0006886">
    <property type="term" value="P:intracellular protein transport"/>
    <property type="evidence" value="ECO:0007669"/>
    <property type="project" value="InterPro"/>
</dbReference>
<dbReference type="GO" id="GO:0000281">
    <property type="term" value="P:mitotic cytokinesis"/>
    <property type="evidence" value="ECO:0000315"/>
    <property type="project" value="dictyBase"/>
</dbReference>
<dbReference type="GO" id="GO:0016192">
    <property type="term" value="P:vesicle-mediated transport"/>
    <property type="evidence" value="ECO:0007669"/>
    <property type="project" value="InterPro"/>
</dbReference>
<dbReference type="FunFam" id="1.25.10.10:FF:000002">
    <property type="entry name" value="AP complex subunit beta"/>
    <property type="match status" value="1"/>
</dbReference>
<dbReference type="Gene3D" id="2.60.40.1150">
    <property type="match status" value="1"/>
</dbReference>
<dbReference type="Gene3D" id="1.25.10.10">
    <property type="entry name" value="Leucine-rich Repeat Variant"/>
    <property type="match status" value="1"/>
</dbReference>
<dbReference type="Gene3D" id="3.30.310.10">
    <property type="entry name" value="TATA-Binding Protein"/>
    <property type="match status" value="1"/>
</dbReference>
<dbReference type="InterPro" id="IPR026739">
    <property type="entry name" value="AP_beta"/>
</dbReference>
<dbReference type="InterPro" id="IPR016342">
    <property type="entry name" value="AP_complex_bsu_1_2_4"/>
</dbReference>
<dbReference type="InterPro" id="IPR011989">
    <property type="entry name" value="ARM-like"/>
</dbReference>
<dbReference type="InterPro" id="IPR016024">
    <property type="entry name" value="ARM-type_fold"/>
</dbReference>
<dbReference type="InterPro" id="IPR015151">
    <property type="entry name" value="B-adaptin_app_sub_C"/>
</dbReference>
<dbReference type="InterPro" id="IPR002553">
    <property type="entry name" value="Clathrin/coatomer_adapt-like_N"/>
</dbReference>
<dbReference type="InterPro" id="IPR008152">
    <property type="entry name" value="Clathrin_a/b/g-adaptin_app_Ig"/>
</dbReference>
<dbReference type="InterPro" id="IPR013041">
    <property type="entry name" value="Clathrin_app_Ig-like_sf"/>
</dbReference>
<dbReference type="InterPro" id="IPR013037">
    <property type="entry name" value="Clathrin_b-adaptin_app_Ig-like"/>
</dbReference>
<dbReference type="InterPro" id="IPR009028">
    <property type="entry name" value="Coatomer/calthrin_app_sub_C"/>
</dbReference>
<dbReference type="InterPro" id="IPR012295">
    <property type="entry name" value="TBP_dom_sf"/>
</dbReference>
<dbReference type="PANTHER" id="PTHR11134">
    <property type="entry name" value="ADAPTOR COMPLEX SUBUNIT BETA FAMILY MEMBER"/>
    <property type="match status" value="1"/>
</dbReference>
<dbReference type="Pfam" id="PF01602">
    <property type="entry name" value="Adaptin_N"/>
    <property type="match status" value="1"/>
</dbReference>
<dbReference type="Pfam" id="PF02883">
    <property type="entry name" value="Alpha_adaptinC2"/>
    <property type="match status" value="1"/>
</dbReference>
<dbReference type="Pfam" id="PF09066">
    <property type="entry name" value="B2-adapt-app_C"/>
    <property type="match status" value="1"/>
</dbReference>
<dbReference type="PIRSF" id="PIRSF002291">
    <property type="entry name" value="AP_complex_beta"/>
    <property type="match status" value="1"/>
</dbReference>
<dbReference type="SMART" id="SM00809">
    <property type="entry name" value="Alpha_adaptinC2"/>
    <property type="match status" value="1"/>
</dbReference>
<dbReference type="SMART" id="SM01020">
    <property type="entry name" value="B2-adapt-app_C"/>
    <property type="match status" value="1"/>
</dbReference>
<dbReference type="SUPFAM" id="SSF48371">
    <property type="entry name" value="ARM repeat"/>
    <property type="match status" value="1"/>
</dbReference>
<dbReference type="SUPFAM" id="SSF49348">
    <property type="entry name" value="Clathrin adaptor appendage domain"/>
    <property type="match status" value="1"/>
</dbReference>
<dbReference type="SUPFAM" id="SSF55711">
    <property type="entry name" value="Subdomain of clathrin and coatomer appendage domain"/>
    <property type="match status" value="1"/>
</dbReference>
<organism>
    <name type="scientific">Dictyostelium discoideum</name>
    <name type="common">Social amoeba</name>
    <dbReference type="NCBI Taxonomy" id="44689"/>
    <lineage>
        <taxon>Eukaryota</taxon>
        <taxon>Amoebozoa</taxon>
        <taxon>Evosea</taxon>
        <taxon>Eumycetozoa</taxon>
        <taxon>Dictyostelia</taxon>
        <taxon>Dictyosteliales</taxon>
        <taxon>Dictyosteliaceae</taxon>
        <taxon>Dictyostelium</taxon>
    </lineage>
</organism>
<sequence length="942" mass="106609">MSDSKYFQTTKKGEIHELKEELLSQREDKKKEAVKKVIAAMTVGKDVSMLFTHVLNCMQTHNLELKKLVYLYVMNYAKNHPDRAILAVNTFQKDASDPNPLIRALAVRTMGCIRVDNITEHLCEPLRHALKDQDPYVRKTAAVCVAKLYDVNPELVENQGFLNILNDLLGDSNPMVVANAVASLTEIDEVSKKEVFRIHSGNLNKLLAALNECTEWGQVFILNSLCKYTPRDSQEAENVCERVAPRLQHANSAVVLSAVKVLMKYMNSIGNNDVIRLFCKKMAPPLVTLLSKEPEIQFLGLRNINLIVQKRPEILQYEMKVFFCKYNDPIYVKMEKLEIMIMLANEKNIEEVLLEFKEYATEIDVEFVRKAVRAIGRCAIKIDRASERCIQVLLDLIQTKVNYVVQEAIIVIKDIFRKYPNKYEGIIATLCANLESLDEPEAKASMIWIIGEYAERIDNAHELLNSFLEGFKDENSQVQLQLLTSIVKLFLKRPKDAQQMVQTVLNLSTQESDNPDLRDRGFVYWRLLSTDFEAAKAVVLSEKPLITDTTSHLDESLLNELILNISTLASVYHKPPETFVTKLKGLNKRGLRNKEEEDEEEPDYVDDDNMNNQQGGQQQQGGYQQQQQQQQQGGYQQQQPQQQQPKSGNLIDLDLSDLGGALPNNNNNNYGNNNNNNMYSPQPQQFNGNSNDLSFLGGGGGGGEVQAPVNKVVVFGGDRSQAIQISGAFTRFQGRINLELNLLNTSQQGMSKFKIQFYQNSFGISPADQILSCGAIEVGQSTDVTIPISCNGQISNPLNPVIDMAMMVLPSQERFYFKMNFPLLCLLTETGRLDRESYLSMWKSIPESNERSVEIQVRLPHVDVDSILRRLNSKNIFEIVRKKAPNQEISFLSCKTESSVYILIELAFNISTNTCRCSSKTTSPDIMALFEHNLNLLINNQI</sequence>
<feature type="chain" id="PRO_0000328676" description="AP-1 complex subunit beta">
    <location>
        <begin position="1"/>
        <end position="942"/>
    </location>
</feature>
<feature type="repeat" description="HEAT 1">
    <location>
        <begin position="45"/>
        <end position="82"/>
    </location>
</feature>
<feature type="repeat" description="HEAT 2">
    <location>
        <begin position="117"/>
        <end position="154"/>
    </location>
</feature>
<feature type="repeat" description="HEAT 3">
    <location>
        <begin position="156"/>
        <end position="193"/>
    </location>
</feature>
<feature type="repeat" description="HEAT 4">
    <location>
        <begin position="273"/>
        <end position="313"/>
    </location>
</feature>
<feature type="repeat" description="HEAT 5">
    <location>
        <begin position="384"/>
        <end position="421"/>
    </location>
</feature>
<feature type="repeat" description="HEAT 6">
    <location>
        <begin position="458"/>
        <end position="495"/>
    </location>
</feature>
<feature type="region of interest" description="Disordered" evidence="2">
    <location>
        <begin position="590"/>
        <end position="700"/>
    </location>
</feature>
<feature type="compositionally biased region" description="Acidic residues" evidence="2">
    <location>
        <begin position="596"/>
        <end position="609"/>
    </location>
</feature>
<feature type="compositionally biased region" description="Low complexity" evidence="2">
    <location>
        <begin position="613"/>
        <end position="645"/>
    </location>
</feature>
<feature type="compositionally biased region" description="Low complexity" evidence="2">
    <location>
        <begin position="664"/>
        <end position="677"/>
    </location>
</feature>
<feature type="compositionally biased region" description="Polar residues" evidence="2">
    <location>
        <begin position="678"/>
        <end position="693"/>
    </location>
</feature>
<protein>
    <recommendedName>
        <fullName>AP-1 complex subunit beta</fullName>
    </recommendedName>
    <alternativeName>
        <fullName>Adaptor protein complex AP-1 subunit beta</fullName>
    </alternativeName>
    <alternativeName>
        <fullName>Adaptor-related protein complex 1 subunit beta</fullName>
    </alternativeName>
    <alternativeName>
        <fullName>Beta-1-adaptin</fullName>
    </alternativeName>
    <alternativeName>
        <fullName>Beta-adaptin 1</fullName>
    </alternativeName>
    <alternativeName>
        <fullName>Clathrin assembly protein complex 1 beta large chain</fullName>
    </alternativeName>
</protein>
<accession>Q54X82</accession>
<reference key="1">
    <citation type="journal article" date="2005" name="Nature">
        <title>The genome of the social amoeba Dictyostelium discoideum.</title>
        <authorList>
            <person name="Eichinger L."/>
            <person name="Pachebat J.A."/>
            <person name="Gloeckner G."/>
            <person name="Rajandream M.A."/>
            <person name="Sucgang R."/>
            <person name="Berriman M."/>
            <person name="Song J."/>
            <person name="Olsen R."/>
            <person name="Szafranski K."/>
            <person name="Xu Q."/>
            <person name="Tunggal B."/>
            <person name="Kummerfeld S."/>
            <person name="Madera M."/>
            <person name="Konfortov B.A."/>
            <person name="Rivero F."/>
            <person name="Bankier A.T."/>
            <person name="Lehmann R."/>
            <person name="Hamlin N."/>
            <person name="Davies R."/>
            <person name="Gaudet P."/>
            <person name="Fey P."/>
            <person name="Pilcher K."/>
            <person name="Chen G."/>
            <person name="Saunders D."/>
            <person name="Sodergren E.J."/>
            <person name="Davis P."/>
            <person name="Kerhornou A."/>
            <person name="Nie X."/>
            <person name="Hall N."/>
            <person name="Anjard C."/>
            <person name="Hemphill L."/>
            <person name="Bason N."/>
            <person name="Farbrother P."/>
            <person name="Desany B."/>
            <person name="Just E."/>
            <person name="Morio T."/>
            <person name="Rost R."/>
            <person name="Churcher C.M."/>
            <person name="Cooper J."/>
            <person name="Haydock S."/>
            <person name="van Driessche N."/>
            <person name="Cronin A."/>
            <person name="Goodhead I."/>
            <person name="Muzny D.M."/>
            <person name="Mourier T."/>
            <person name="Pain A."/>
            <person name="Lu M."/>
            <person name="Harper D."/>
            <person name="Lindsay R."/>
            <person name="Hauser H."/>
            <person name="James K.D."/>
            <person name="Quiles M."/>
            <person name="Madan Babu M."/>
            <person name="Saito T."/>
            <person name="Buchrieser C."/>
            <person name="Wardroper A."/>
            <person name="Felder M."/>
            <person name="Thangavelu M."/>
            <person name="Johnson D."/>
            <person name="Knights A."/>
            <person name="Loulseged H."/>
            <person name="Mungall K.L."/>
            <person name="Oliver K."/>
            <person name="Price C."/>
            <person name="Quail M.A."/>
            <person name="Urushihara H."/>
            <person name="Hernandez J."/>
            <person name="Rabbinowitsch E."/>
            <person name="Steffen D."/>
            <person name="Sanders M."/>
            <person name="Ma J."/>
            <person name="Kohara Y."/>
            <person name="Sharp S."/>
            <person name="Simmonds M.N."/>
            <person name="Spiegler S."/>
            <person name="Tivey A."/>
            <person name="Sugano S."/>
            <person name="White B."/>
            <person name="Walker D."/>
            <person name="Woodward J.R."/>
            <person name="Winckler T."/>
            <person name="Tanaka Y."/>
            <person name="Shaulsky G."/>
            <person name="Schleicher M."/>
            <person name="Weinstock G.M."/>
            <person name="Rosenthal A."/>
            <person name="Cox E.C."/>
            <person name="Chisholm R.L."/>
            <person name="Gibbs R.A."/>
            <person name="Loomis W.F."/>
            <person name="Platzer M."/>
            <person name="Kay R.R."/>
            <person name="Williams J.G."/>
            <person name="Dear P.H."/>
            <person name="Noegel A.A."/>
            <person name="Barrell B.G."/>
            <person name="Kuspa A."/>
        </authorList>
    </citation>
    <scope>NUCLEOTIDE SEQUENCE [LARGE SCALE GENOMIC DNA]</scope>
    <source>
        <strain>AX4</strain>
    </source>
</reference>
<keyword id="KW-0968">Cytoplasmic vesicle</keyword>
<keyword id="KW-0333">Golgi apparatus</keyword>
<keyword id="KW-0472">Membrane</keyword>
<keyword id="KW-0653">Protein transport</keyword>
<keyword id="KW-1185">Reference proteome</keyword>
<keyword id="KW-0677">Repeat</keyword>
<keyword id="KW-0813">Transport</keyword>
<gene>
    <name type="primary">ap1b1</name>
    <name type="ORF">DDB_G0279141</name>
</gene>
<comment type="function">
    <text>Subunit of clathrin-associated adaptor protein complex 1 that plays a role in protein sorting in the trans-Golgi network (TGN) and endosomes. The AP complexes mediate the recruitment of clathrin to membranes and the recognition of sorting signals within the cytosolic tails of transmembrane cargo molecules. Also involved in early steps of phagocytosis and macropinocytosis.</text>
</comment>
<comment type="subunit">
    <text evidence="1">Adaptor protein complex 1 (AP-1) is a heterotetramer composed of two large adaptins (gamma-type subunit and beta-type subunit), a medium adaptin (mu-type subunit) and a small adaptin (sigma-type subunit).</text>
</comment>
<comment type="subcellular location">
    <subcellularLocation>
        <location>Golgi apparatus</location>
        <location>trans-Golgi network</location>
    </subcellularLocation>
    <subcellularLocation>
        <location evidence="1">Cytoplasmic vesicle</location>
        <location evidence="1">Clathrin-coated vesicle membrane</location>
    </subcellularLocation>
</comment>
<comment type="similarity">
    <text evidence="3">Belongs to the adaptor complexes large subunit family.</text>
</comment>
<proteinExistence type="inferred from homology"/>
<evidence type="ECO:0000250" key="1"/>
<evidence type="ECO:0000256" key="2">
    <source>
        <dbReference type="SAM" id="MobiDB-lite"/>
    </source>
</evidence>
<evidence type="ECO:0000305" key="3"/>
<name>AP1B_DICDI</name>